<sequence length="375" mass="41635">MEAESPASAGASEPRALGTVDSIGSQLSRIRRKLFTWDILKTIALGQMLSLCICGTAITSQYLAEKYRVNTPMLQSFINYCLLFLVYTLMLAFQSGSDNLLEILRRKWWKYTLLGLADVEANYLIVRAYQYTTLTSVQLLDCFGIPVLMALSWFILRARYKVIHFIAVFVCLLGVGTMVGADILAGREDNSGSDVLIGDILVLLGASLYAVSNVCEEYIVKKLSRQEFLGMVGLFGTIISGIQLLIVEYKDIARIQWDWKIALLFVAFALCMFCLYSFMPLVIKVTSATSVNLGILTADLYSLFFGLFLFEYKFSGLYILSFTVIMVGFILYCSTPTRTVEPPESSVPPVTSIGIDNLGLKLEESGLPETHSAVL</sequence>
<feature type="chain" id="PRO_0000307310" description="Solute carrier family 35 member F2">
    <location>
        <begin position="1"/>
        <end position="375"/>
    </location>
</feature>
<feature type="transmembrane region" description="Helical" evidence="2">
    <location>
        <begin position="39"/>
        <end position="59"/>
    </location>
</feature>
<feature type="transmembrane region" description="Helical" evidence="2">
    <location>
        <begin position="73"/>
        <end position="93"/>
    </location>
</feature>
<feature type="transmembrane region" description="Helical" evidence="2">
    <location>
        <begin position="108"/>
        <end position="126"/>
    </location>
</feature>
<feature type="transmembrane region" description="Helical" evidence="2">
    <location>
        <begin position="136"/>
        <end position="156"/>
    </location>
</feature>
<feature type="transmembrane region" description="Helical" evidence="2">
    <location>
        <begin position="165"/>
        <end position="185"/>
    </location>
</feature>
<feature type="transmembrane region" description="Helical" evidence="2">
    <location>
        <begin position="195"/>
        <end position="215"/>
    </location>
</feature>
<feature type="transmembrane region" description="Helical" evidence="2">
    <location>
        <begin position="227"/>
        <end position="247"/>
    </location>
</feature>
<feature type="transmembrane region" description="Helical" evidence="2">
    <location>
        <begin position="263"/>
        <end position="283"/>
    </location>
</feature>
<feature type="transmembrane region" description="Helical" evidence="2">
    <location>
        <begin position="290"/>
        <end position="310"/>
    </location>
</feature>
<feature type="transmembrane region" description="Helical" evidence="2">
    <location>
        <begin position="314"/>
        <end position="334"/>
    </location>
</feature>
<feature type="modified residue" description="N-acetylmethionine" evidence="1">
    <location>
        <position position="1"/>
    </location>
</feature>
<feature type="modified residue" description="Phosphoserine" evidence="1">
    <location>
        <position position="5"/>
    </location>
</feature>
<feature type="modified residue" description="Phosphoserine" evidence="4">
    <location>
        <position position="22"/>
    </location>
</feature>
<feature type="modified residue" description="Phosphoserine" evidence="4">
    <location>
        <position position="25"/>
    </location>
</feature>
<feature type="modified residue" description="Phosphoserine" evidence="4">
    <location>
        <position position="28"/>
    </location>
</feature>
<feature type="modified residue" description="Phosphoserine" evidence="1">
    <location>
        <position position="372"/>
    </location>
</feature>
<feature type="sequence conflict" description="In Ref. 2; AAH55843." evidence="3" ref="2">
    <original>L</original>
    <variation>V</variation>
    <location>
        <position position="89"/>
    </location>
</feature>
<feature type="sequence conflict" description="In Ref. 1; BAB23867." evidence="3" ref="1">
    <original>R</original>
    <variation>G</variation>
    <location>
        <position position="127"/>
    </location>
</feature>
<gene>
    <name type="primary">Slc35f2</name>
</gene>
<accession>Q7TML3</accession>
<accession>Q9DB62</accession>
<organism>
    <name type="scientific">Mus musculus</name>
    <name type="common">Mouse</name>
    <dbReference type="NCBI Taxonomy" id="10090"/>
    <lineage>
        <taxon>Eukaryota</taxon>
        <taxon>Metazoa</taxon>
        <taxon>Chordata</taxon>
        <taxon>Craniata</taxon>
        <taxon>Vertebrata</taxon>
        <taxon>Euteleostomi</taxon>
        <taxon>Mammalia</taxon>
        <taxon>Eutheria</taxon>
        <taxon>Euarchontoglires</taxon>
        <taxon>Glires</taxon>
        <taxon>Rodentia</taxon>
        <taxon>Myomorpha</taxon>
        <taxon>Muroidea</taxon>
        <taxon>Muridae</taxon>
        <taxon>Murinae</taxon>
        <taxon>Mus</taxon>
        <taxon>Mus</taxon>
    </lineage>
</organism>
<proteinExistence type="evidence at protein level"/>
<comment type="function">
    <text evidence="3">Putative solute transporter.</text>
</comment>
<comment type="subcellular location">
    <subcellularLocation>
        <location evidence="3">Membrane</location>
        <topology evidence="3">Multi-pass membrane protein</topology>
    </subcellularLocation>
</comment>
<comment type="similarity">
    <text evidence="3">Belongs to the SLC35F solute transporter family.</text>
</comment>
<reference key="1">
    <citation type="journal article" date="2005" name="Science">
        <title>The transcriptional landscape of the mammalian genome.</title>
        <authorList>
            <person name="Carninci P."/>
            <person name="Kasukawa T."/>
            <person name="Katayama S."/>
            <person name="Gough J."/>
            <person name="Frith M.C."/>
            <person name="Maeda N."/>
            <person name="Oyama R."/>
            <person name="Ravasi T."/>
            <person name="Lenhard B."/>
            <person name="Wells C."/>
            <person name="Kodzius R."/>
            <person name="Shimokawa K."/>
            <person name="Bajic V.B."/>
            <person name="Brenner S.E."/>
            <person name="Batalov S."/>
            <person name="Forrest A.R."/>
            <person name="Zavolan M."/>
            <person name="Davis M.J."/>
            <person name="Wilming L.G."/>
            <person name="Aidinis V."/>
            <person name="Allen J.E."/>
            <person name="Ambesi-Impiombato A."/>
            <person name="Apweiler R."/>
            <person name="Aturaliya R.N."/>
            <person name="Bailey T.L."/>
            <person name="Bansal M."/>
            <person name="Baxter L."/>
            <person name="Beisel K.W."/>
            <person name="Bersano T."/>
            <person name="Bono H."/>
            <person name="Chalk A.M."/>
            <person name="Chiu K.P."/>
            <person name="Choudhary V."/>
            <person name="Christoffels A."/>
            <person name="Clutterbuck D.R."/>
            <person name="Crowe M.L."/>
            <person name="Dalla E."/>
            <person name="Dalrymple B.P."/>
            <person name="de Bono B."/>
            <person name="Della Gatta G."/>
            <person name="di Bernardo D."/>
            <person name="Down T."/>
            <person name="Engstrom P."/>
            <person name="Fagiolini M."/>
            <person name="Faulkner G."/>
            <person name="Fletcher C.F."/>
            <person name="Fukushima T."/>
            <person name="Furuno M."/>
            <person name="Futaki S."/>
            <person name="Gariboldi M."/>
            <person name="Georgii-Hemming P."/>
            <person name="Gingeras T.R."/>
            <person name="Gojobori T."/>
            <person name="Green R.E."/>
            <person name="Gustincich S."/>
            <person name="Harbers M."/>
            <person name="Hayashi Y."/>
            <person name="Hensch T.K."/>
            <person name="Hirokawa N."/>
            <person name="Hill D."/>
            <person name="Huminiecki L."/>
            <person name="Iacono M."/>
            <person name="Ikeo K."/>
            <person name="Iwama A."/>
            <person name="Ishikawa T."/>
            <person name="Jakt M."/>
            <person name="Kanapin A."/>
            <person name="Katoh M."/>
            <person name="Kawasawa Y."/>
            <person name="Kelso J."/>
            <person name="Kitamura H."/>
            <person name="Kitano H."/>
            <person name="Kollias G."/>
            <person name="Krishnan S.P."/>
            <person name="Kruger A."/>
            <person name="Kummerfeld S.K."/>
            <person name="Kurochkin I.V."/>
            <person name="Lareau L.F."/>
            <person name="Lazarevic D."/>
            <person name="Lipovich L."/>
            <person name="Liu J."/>
            <person name="Liuni S."/>
            <person name="McWilliam S."/>
            <person name="Madan Babu M."/>
            <person name="Madera M."/>
            <person name="Marchionni L."/>
            <person name="Matsuda H."/>
            <person name="Matsuzawa S."/>
            <person name="Miki H."/>
            <person name="Mignone F."/>
            <person name="Miyake S."/>
            <person name="Morris K."/>
            <person name="Mottagui-Tabar S."/>
            <person name="Mulder N."/>
            <person name="Nakano N."/>
            <person name="Nakauchi H."/>
            <person name="Ng P."/>
            <person name="Nilsson R."/>
            <person name="Nishiguchi S."/>
            <person name="Nishikawa S."/>
            <person name="Nori F."/>
            <person name="Ohara O."/>
            <person name="Okazaki Y."/>
            <person name="Orlando V."/>
            <person name="Pang K.C."/>
            <person name="Pavan W.J."/>
            <person name="Pavesi G."/>
            <person name="Pesole G."/>
            <person name="Petrovsky N."/>
            <person name="Piazza S."/>
            <person name="Reed J."/>
            <person name="Reid J.F."/>
            <person name="Ring B.Z."/>
            <person name="Ringwald M."/>
            <person name="Rost B."/>
            <person name="Ruan Y."/>
            <person name="Salzberg S.L."/>
            <person name="Sandelin A."/>
            <person name="Schneider C."/>
            <person name="Schoenbach C."/>
            <person name="Sekiguchi K."/>
            <person name="Semple C.A."/>
            <person name="Seno S."/>
            <person name="Sessa L."/>
            <person name="Sheng Y."/>
            <person name="Shibata Y."/>
            <person name="Shimada H."/>
            <person name="Shimada K."/>
            <person name="Silva D."/>
            <person name="Sinclair B."/>
            <person name="Sperling S."/>
            <person name="Stupka E."/>
            <person name="Sugiura K."/>
            <person name="Sultana R."/>
            <person name="Takenaka Y."/>
            <person name="Taki K."/>
            <person name="Tammoja K."/>
            <person name="Tan S.L."/>
            <person name="Tang S."/>
            <person name="Taylor M.S."/>
            <person name="Tegner J."/>
            <person name="Teichmann S.A."/>
            <person name="Ueda H.R."/>
            <person name="van Nimwegen E."/>
            <person name="Verardo R."/>
            <person name="Wei C.L."/>
            <person name="Yagi K."/>
            <person name="Yamanishi H."/>
            <person name="Zabarovsky E."/>
            <person name="Zhu S."/>
            <person name="Zimmer A."/>
            <person name="Hide W."/>
            <person name="Bult C."/>
            <person name="Grimmond S.M."/>
            <person name="Teasdale R.D."/>
            <person name="Liu E.T."/>
            <person name="Brusic V."/>
            <person name="Quackenbush J."/>
            <person name="Wahlestedt C."/>
            <person name="Mattick J.S."/>
            <person name="Hume D.A."/>
            <person name="Kai C."/>
            <person name="Sasaki D."/>
            <person name="Tomaru Y."/>
            <person name="Fukuda S."/>
            <person name="Kanamori-Katayama M."/>
            <person name="Suzuki M."/>
            <person name="Aoki J."/>
            <person name="Arakawa T."/>
            <person name="Iida J."/>
            <person name="Imamura K."/>
            <person name="Itoh M."/>
            <person name="Kato T."/>
            <person name="Kawaji H."/>
            <person name="Kawagashira N."/>
            <person name="Kawashima T."/>
            <person name="Kojima M."/>
            <person name="Kondo S."/>
            <person name="Konno H."/>
            <person name="Nakano K."/>
            <person name="Ninomiya N."/>
            <person name="Nishio T."/>
            <person name="Okada M."/>
            <person name="Plessy C."/>
            <person name="Shibata K."/>
            <person name="Shiraki T."/>
            <person name="Suzuki S."/>
            <person name="Tagami M."/>
            <person name="Waki K."/>
            <person name="Watahiki A."/>
            <person name="Okamura-Oho Y."/>
            <person name="Suzuki H."/>
            <person name="Kawai J."/>
            <person name="Hayashizaki Y."/>
        </authorList>
    </citation>
    <scope>NUCLEOTIDE SEQUENCE [LARGE SCALE MRNA]</scope>
    <source>
        <strain>C57BL/6J</strain>
        <tissue>Cerebellum</tissue>
    </source>
</reference>
<reference key="2">
    <citation type="journal article" date="2004" name="Genome Res.">
        <title>The status, quality, and expansion of the NIH full-length cDNA project: the Mammalian Gene Collection (MGC).</title>
        <authorList>
            <consortium name="The MGC Project Team"/>
        </authorList>
    </citation>
    <scope>NUCLEOTIDE SEQUENCE [LARGE SCALE MRNA]</scope>
    <source>
        <strain>Czech II</strain>
        <tissue>Mammary tumor</tissue>
    </source>
</reference>
<reference key="3">
    <citation type="journal article" date="2010" name="Cell">
        <title>A tissue-specific atlas of mouse protein phosphorylation and expression.</title>
        <authorList>
            <person name="Huttlin E.L."/>
            <person name="Jedrychowski M.P."/>
            <person name="Elias J.E."/>
            <person name="Goswami T."/>
            <person name="Rad R."/>
            <person name="Beausoleil S.A."/>
            <person name="Villen J."/>
            <person name="Haas W."/>
            <person name="Sowa M.E."/>
            <person name="Gygi S.P."/>
        </authorList>
    </citation>
    <scope>PHOSPHORYLATION [LARGE SCALE ANALYSIS] AT SER-22; SER-25 AND SER-28</scope>
    <scope>IDENTIFICATION BY MASS SPECTROMETRY [LARGE SCALE ANALYSIS]</scope>
    <source>
        <tissue>Kidney</tissue>
        <tissue>Testis</tissue>
    </source>
</reference>
<evidence type="ECO:0000250" key="1">
    <source>
        <dbReference type="UniProtKB" id="Q8IXU6"/>
    </source>
</evidence>
<evidence type="ECO:0000255" key="2"/>
<evidence type="ECO:0000305" key="3"/>
<evidence type="ECO:0007744" key="4">
    <source>
    </source>
</evidence>
<name>S35F2_MOUSE</name>
<keyword id="KW-0007">Acetylation</keyword>
<keyword id="KW-0472">Membrane</keyword>
<keyword id="KW-0597">Phosphoprotein</keyword>
<keyword id="KW-1185">Reference proteome</keyword>
<keyword id="KW-0812">Transmembrane</keyword>
<keyword id="KW-1133">Transmembrane helix</keyword>
<keyword id="KW-0813">Transport</keyword>
<dbReference type="EMBL" id="AK005182">
    <property type="protein sequence ID" value="BAB23867.1"/>
    <property type="molecule type" value="mRNA"/>
</dbReference>
<dbReference type="EMBL" id="BC055843">
    <property type="protein sequence ID" value="AAH55843.1"/>
    <property type="molecule type" value="mRNA"/>
</dbReference>
<dbReference type="CCDS" id="CCDS40639.1"/>
<dbReference type="RefSeq" id="NP_082336.3">
    <property type="nucleotide sequence ID" value="NM_028060.3"/>
</dbReference>
<dbReference type="SMR" id="Q7TML3"/>
<dbReference type="FunCoup" id="Q7TML3">
    <property type="interactions" value="3"/>
</dbReference>
<dbReference type="STRING" id="10090.ENSMUSP00000046528"/>
<dbReference type="iPTMnet" id="Q7TML3"/>
<dbReference type="PhosphoSitePlus" id="Q7TML3"/>
<dbReference type="jPOST" id="Q7TML3"/>
<dbReference type="PaxDb" id="10090-ENSMUSP00000046528"/>
<dbReference type="PeptideAtlas" id="Q7TML3"/>
<dbReference type="ProteomicsDB" id="256679"/>
<dbReference type="Antibodypedia" id="31913">
    <property type="antibodies" value="63 antibodies from 18 providers"/>
</dbReference>
<dbReference type="DNASU" id="72022"/>
<dbReference type="Ensembl" id="ENSMUST00000048670.10">
    <property type="protein sequence ID" value="ENSMUSP00000046528.9"/>
    <property type="gene ID" value="ENSMUSG00000042195.10"/>
</dbReference>
<dbReference type="GeneID" id="72022"/>
<dbReference type="KEGG" id="mmu:72022"/>
<dbReference type="UCSC" id="uc009pmn.2">
    <property type="organism name" value="mouse"/>
</dbReference>
<dbReference type="AGR" id="MGI:1919272"/>
<dbReference type="CTD" id="54733"/>
<dbReference type="MGI" id="MGI:1919272">
    <property type="gene designation" value="Slc35f2"/>
</dbReference>
<dbReference type="VEuPathDB" id="HostDB:ENSMUSG00000042195"/>
<dbReference type="eggNOG" id="KOG2766">
    <property type="taxonomic scope" value="Eukaryota"/>
</dbReference>
<dbReference type="GeneTree" id="ENSGT00390000015655"/>
<dbReference type="HOGENOM" id="CLU_039639_0_0_1"/>
<dbReference type="InParanoid" id="Q7TML3"/>
<dbReference type="OMA" id="IQVFHYS"/>
<dbReference type="OrthoDB" id="429955at2759"/>
<dbReference type="PhylomeDB" id="Q7TML3"/>
<dbReference type="TreeFam" id="TF313645"/>
<dbReference type="BioGRID-ORCS" id="72022">
    <property type="hits" value="1 hit in 78 CRISPR screens"/>
</dbReference>
<dbReference type="ChiTaRS" id="Slc35f2">
    <property type="organism name" value="mouse"/>
</dbReference>
<dbReference type="PRO" id="PR:Q7TML3"/>
<dbReference type="Proteomes" id="UP000000589">
    <property type="component" value="Chromosome 9"/>
</dbReference>
<dbReference type="RNAct" id="Q7TML3">
    <property type="molecule type" value="protein"/>
</dbReference>
<dbReference type="Bgee" id="ENSMUSG00000042195">
    <property type="expression patterns" value="Expressed in jejunum and 159 other cell types or tissues"/>
</dbReference>
<dbReference type="GO" id="GO:0016020">
    <property type="term" value="C:membrane"/>
    <property type="evidence" value="ECO:0007669"/>
    <property type="project" value="UniProtKB-SubCell"/>
</dbReference>
<dbReference type="GO" id="GO:0022857">
    <property type="term" value="F:transmembrane transporter activity"/>
    <property type="evidence" value="ECO:0007669"/>
    <property type="project" value="InterPro"/>
</dbReference>
<dbReference type="InterPro" id="IPR009262">
    <property type="entry name" value="SLC35_F1/F2/F6"/>
</dbReference>
<dbReference type="InterPro" id="IPR052221">
    <property type="entry name" value="SLC35F_Transporter"/>
</dbReference>
<dbReference type="PANTHER" id="PTHR14233">
    <property type="entry name" value="DUF914-RELATED"/>
    <property type="match status" value="1"/>
</dbReference>
<dbReference type="PANTHER" id="PTHR14233:SF12">
    <property type="entry name" value="SOLUTE CARRIER FAMILY 35 MEMBER F2"/>
    <property type="match status" value="1"/>
</dbReference>
<dbReference type="Pfam" id="PF06027">
    <property type="entry name" value="SLC35F"/>
    <property type="match status" value="1"/>
</dbReference>
<dbReference type="SUPFAM" id="SSF103481">
    <property type="entry name" value="Multidrug resistance efflux transporter EmrE"/>
    <property type="match status" value="1"/>
</dbReference>
<protein>
    <recommendedName>
        <fullName>Solute carrier family 35 member F2</fullName>
    </recommendedName>
</protein>